<gene>
    <name evidence="1" type="primary">ribH</name>
    <name type="ordered locus">GM21_1229</name>
</gene>
<protein>
    <recommendedName>
        <fullName evidence="1">6,7-dimethyl-8-ribityllumazine synthase</fullName>
        <shortName evidence="1">DMRL synthase</shortName>
        <shortName evidence="1">LS</shortName>
        <shortName evidence="1">Lumazine synthase</shortName>
        <ecNumber evidence="1">2.5.1.78</ecNumber>
    </recommendedName>
</protein>
<evidence type="ECO:0000255" key="1">
    <source>
        <dbReference type="HAMAP-Rule" id="MF_00178"/>
    </source>
</evidence>
<feature type="chain" id="PRO_1000203793" description="6,7-dimethyl-8-ribityllumazine synthase">
    <location>
        <begin position="1"/>
        <end position="155"/>
    </location>
</feature>
<feature type="active site" description="Proton donor" evidence="1">
    <location>
        <position position="89"/>
    </location>
</feature>
<feature type="binding site" evidence="1">
    <location>
        <position position="23"/>
    </location>
    <ligand>
        <name>5-amino-6-(D-ribitylamino)uracil</name>
        <dbReference type="ChEBI" id="CHEBI:15934"/>
    </ligand>
</feature>
<feature type="binding site" evidence="1">
    <location>
        <begin position="57"/>
        <end position="59"/>
    </location>
    <ligand>
        <name>5-amino-6-(D-ribitylamino)uracil</name>
        <dbReference type="ChEBI" id="CHEBI:15934"/>
    </ligand>
</feature>
<feature type="binding site" evidence="1">
    <location>
        <begin position="81"/>
        <end position="83"/>
    </location>
    <ligand>
        <name>5-amino-6-(D-ribitylamino)uracil</name>
        <dbReference type="ChEBI" id="CHEBI:15934"/>
    </ligand>
</feature>
<feature type="binding site" evidence="1">
    <location>
        <begin position="86"/>
        <end position="87"/>
    </location>
    <ligand>
        <name>(2S)-2-hydroxy-3-oxobutyl phosphate</name>
        <dbReference type="ChEBI" id="CHEBI:58830"/>
    </ligand>
</feature>
<feature type="binding site" evidence="1">
    <location>
        <position position="114"/>
    </location>
    <ligand>
        <name>5-amino-6-(D-ribitylamino)uracil</name>
        <dbReference type="ChEBI" id="CHEBI:15934"/>
    </ligand>
</feature>
<feature type="binding site" evidence="1">
    <location>
        <position position="128"/>
    </location>
    <ligand>
        <name>(2S)-2-hydroxy-3-oxobutyl phosphate</name>
        <dbReference type="ChEBI" id="CHEBI:58830"/>
    </ligand>
</feature>
<reference key="1">
    <citation type="submission" date="2009-07" db="EMBL/GenBank/DDBJ databases">
        <title>Complete sequence of Geobacter sp. M21.</title>
        <authorList>
            <consortium name="US DOE Joint Genome Institute"/>
            <person name="Lucas S."/>
            <person name="Copeland A."/>
            <person name="Lapidus A."/>
            <person name="Glavina del Rio T."/>
            <person name="Dalin E."/>
            <person name="Tice H."/>
            <person name="Bruce D."/>
            <person name="Goodwin L."/>
            <person name="Pitluck S."/>
            <person name="Saunders E."/>
            <person name="Brettin T."/>
            <person name="Detter J.C."/>
            <person name="Han C."/>
            <person name="Larimer F."/>
            <person name="Land M."/>
            <person name="Hauser L."/>
            <person name="Kyrpides N."/>
            <person name="Ovchinnikova G."/>
            <person name="Lovley D."/>
        </authorList>
    </citation>
    <scope>NUCLEOTIDE SEQUENCE [LARGE SCALE GENOMIC DNA]</scope>
    <source>
        <strain>M21</strain>
    </source>
</reference>
<dbReference type="EC" id="2.5.1.78" evidence="1"/>
<dbReference type="EMBL" id="CP001661">
    <property type="protein sequence ID" value="ACT17290.1"/>
    <property type="molecule type" value="Genomic_DNA"/>
</dbReference>
<dbReference type="SMR" id="C6E3M5"/>
<dbReference type="STRING" id="443144.GM21_1229"/>
<dbReference type="KEGG" id="gem:GM21_1229"/>
<dbReference type="eggNOG" id="COG0054">
    <property type="taxonomic scope" value="Bacteria"/>
</dbReference>
<dbReference type="HOGENOM" id="CLU_089358_1_1_7"/>
<dbReference type="OrthoDB" id="9809709at2"/>
<dbReference type="UniPathway" id="UPA00275">
    <property type="reaction ID" value="UER00404"/>
</dbReference>
<dbReference type="GO" id="GO:0005829">
    <property type="term" value="C:cytosol"/>
    <property type="evidence" value="ECO:0007669"/>
    <property type="project" value="TreeGrafter"/>
</dbReference>
<dbReference type="GO" id="GO:0009349">
    <property type="term" value="C:riboflavin synthase complex"/>
    <property type="evidence" value="ECO:0007669"/>
    <property type="project" value="InterPro"/>
</dbReference>
<dbReference type="GO" id="GO:0000906">
    <property type="term" value="F:6,7-dimethyl-8-ribityllumazine synthase activity"/>
    <property type="evidence" value="ECO:0007669"/>
    <property type="project" value="UniProtKB-UniRule"/>
</dbReference>
<dbReference type="GO" id="GO:0009231">
    <property type="term" value="P:riboflavin biosynthetic process"/>
    <property type="evidence" value="ECO:0007669"/>
    <property type="project" value="UniProtKB-UniRule"/>
</dbReference>
<dbReference type="CDD" id="cd09209">
    <property type="entry name" value="Lumazine_synthase-I"/>
    <property type="match status" value="1"/>
</dbReference>
<dbReference type="FunFam" id="3.40.50.960:FF:000001">
    <property type="entry name" value="6,7-dimethyl-8-ribityllumazine synthase"/>
    <property type="match status" value="1"/>
</dbReference>
<dbReference type="Gene3D" id="3.40.50.960">
    <property type="entry name" value="Lumazine/riboflavin synthase"/>
    <property type="match status" value="1"/>
</dbReference>
<dbReference type="HAMAP" id="MF_00178">
    <property type="entry name" value="Lumazine_synth"/>
    <property type="match status" value="1"/>
</dbReference>
<dbReference type="InterPro" id="IPR034964">
    <property type="entry name" value="LS"/>
</dbReference>
<dbReference type="InterPro" id="IPR002180">
    <property type="entry name" value="LS/RS"/>
</dbReference>
<dbReference type="InterPro" id="IPR036467">
    <property type="entry name" value="LS/RS_sf"/>
</dbReference>
<dbReference type="NCBIfam" id="TIGR00114">
    <property type="entry name" value="lumazine-synth"/>
    <property type="match status" value="1"/>
</dbReference>
<dbReference type="NCBIfam" id="NF000812">
    <property type="entry name" value="PRK00061.1-4"/>
    <property type="match status" value="1"/>
</dbReference>
<dbReference type="PANTHER" id="PTHR21058:SF0">
    <property type="entry name" value="6,7-DIMETHYL-8-RIBITYLLUMAZINE SYNTHASE"/>
    <property type="match status" value="1"/>
</dbReference>
<dbReference type="PANTHER" id="PTHR21058">
    <property type="entry name" value="6,7-DIMETHYL-8-RIBITYLLUMAZINE SYNTHASE DMRL SYNTHASE LUMAZINE SYNTHASE"/>
    <property type="match status" value="1"/>
</dbReference>
<dbReference type="Pfam" id="PF00885">
    <property type="entry name" value="DMRL_synthase"/>
    <property type="match status" value="1"/>
</dbReference>
<dbReference type="SUPFAM" id="SSF52121">
    <property type="entry name" value="Lumazine synthase"/>
    <property type="match status" value="1"/>
</dbReference>
<name>RISB_GEOSM</name>
<comment type="function">
    <text evidence="1">Catalyzes the formation of 6,7-dimethyl-8-ribityllumazine by condensation of 5-amino-6-(D-ribitylamino)uracil with 3,4-dihydroxy-2-butanone 4-phosphate. This is the penultimate step in the biosynthesis of riboflavin.</text>
</comment>
<comment type="catalytic activity">
    <reaction evidence="1">
        <text>(2S)-2-hydroxy-3-oxobutyl phosphate + 5-amino-6-(D-ribitylamino)uracil = 6,7-dimethyl-8-(1-D-ribityl)lumazine + phosphate + 2 H2O + H(+)</text>
        <dbReference type="Rhea" id="RHEA:26152"/>
        <dbReference type="ChEBI" id="CHEBI:15377"/>
        <dbReference type="ChEBI" id="CHEBI:15378"/>
        <dbReference type="ChEBI" id="CHEBI:15934"/>
        <dbReference type="ChEBI" id="CHEBI:43474"/>
        <dbReference type="ChEBI" id="CHEBI:58201"/>
        <dbReference type="ChEBI" id="CHEBI:58830"/>
        <dbReference type="EC" id="2.5.1.78"/>
    </reaction>
</comment>
<comment type="pathway">
    <text evidence="1">Cofactor biosynthesis; riboflavin biosynthesis; riboflavin from 2-hydroxy-3-oxobutyl phosphate and 5-amino-6-(D-ribitylamino)uracil: step 1/2.</text>
</comment>
<comment type="similarity">
    <text evidence="1">Belongs to the DMRL synthase family.</text>
</comment>
<sequence>MPKYVEGKLNAEGLKFGIIVGRFNSFIGERLLEGALDALLRHGADDAQITVVRVPGAFEIPLTAQKMAGSGNYDALICLGAVIRGSTPHFDYVSSEVSKGIAHASLATGVPVAFGVLTTDTIEQAIERAGTKAGNKGFDAAMTVIEIANVFKEMK</sequence>
<accession>C6E3M5</accession>
<proteinExistence type="inferred from homology"/>
<keyword id="KW-0686">Riboflavin biosynthesis</keyword>
<keyword id="KW-0808">Transferase</keyword>
<organism>
    <name type="scientific">Geobacter sp. (strain M21)</name>
    <dbReference type="NCBI Taxonomy" id="443144"/>
    <lineage>
        <taxon>Bacteria</taxon>
        <taxon>Pseudomonadati</taxon>
        <taxon>Thermodesulfobacteriota</taxon>
        <taxon>Desulfuromonadia</taxon>
        <taxon>Geobacterales</taxon>
        <taxon>Geobacteraceae</taxon>
        <taxon>Geobacter</taxon>
    </lineage>
</organism>